<evidence type="ECO:0000255" key="1">
    <source>
        <dbReference type="PROSITE-ProRule" id="PRU00227"/>
    </source>
</evidence>
<evidence type="ECO:0000256" key="2">
    <source>
        <dbReference type="SAM" id="MobiDB-lite"/>
    </source>
</evidence>
<evidence type="ECO:0000269" key="3">
    <source>
    </source>
</evidence>
<evidence type="ECO:0000269" key="4">
    <source>
    </source>
</evidence>
<evidence type="ECO:0000269" key="5">
    <source>
    </source>
</evidence>
<evidence type="ECO:0000305" key="6"/>
<sequence length="863" mass="101825">MGYDSQVRTKKRHRITVVCTNCKKRKSKCDRTKPCGTCVRLGDVDSCVYLTDSSGQPESSPSLNDADPLRKQSTPAERISPGFIKKRRSSQTRQDEDHWQRVRELENQSSLYYLPIHEETPFFIDLIPNGFYLETKRSADNLFGLFTDRAIENRDPYLQAMVTFRSIAIKKMMDKLGSNGNNVKNGSLPKSFEALSTFDADDERHISDDVVGKGNNFRMHQTIHKSLFNKFAQYRENNAKKFSSETILAKDYLPPLKILESEVLALFEEKIYNMIPIFDMKVLRHEITIFYQNIVEKGNPISIKHYDHMVFCIILLIIKICRLSVQFSKLTPYIYPVLQEIDTSKFLALVKHYLFETKVLRKCNLLQLQCLILLRFLHWCAPEDGDGPETQYCQILMGTIISSCKEMGINWYCFSHPEKYSFKINRHTRPSYDIMKPSDYISVFRKIWSYVLFWDRKMCFISGEECQIGKTLQCHFKEEADTPTWYIRMLTLDNLMKKINDTLNDDPGKVDLNLLHRLINDLKRNFHILKSLSKNEKETMRHFDFEMEWIIDLFSLSLLHGEMIFYEYDCNITKFYKSFQDLWDMVIHISEKCYNYFFNSDALEVDSLTKFYTNRIVEIVANKVLVIVPAFILRGDRFKTIQYADKKKMIEFLYGVSSVYFNEFGFEYYRCFRKMFTAKIAYKILNRSCEKDAWRIILKFLLNELKLEDNGDSYIDYNDMRLNDICPIILEFQETVQKYDGYRPDILSIWNNEFYPIGKYNDDMTGFKFQMRIKEMQEFLDMEKYSDRFNIFSSFYDHASSQLAKHTEVDTNISITNEQVAEIPQKELLQQPLAPALPVNDLIVSEFDVIEDIFDPVDFVSFF</sequence>
<gene>
    <name type="primary">OAF3</name>
    <name type="ordered locus">YKR064W</name>
</gene>
<feature type="chain" id="PRO_0000115002" description="Oleate activated transcription factor 3">
    <location>
        <begin position="1"/>
        <end position="863"/>
    </location>
</feature>
<feature type="DNA-binding region" description="Zn(2)-C6 fungal-type" evidence="1">
    <location>
        <begin position="18"/>
        <end position="47"/>
    </location>
</feature>
<feature type="region of interest" description="Disordered" evidence="2">
    <location>
        <begin position="52"/>
        <end position="99"/>
    </location>
</feature>
<feature type="compositionally biased region" description="Polar residues" evidence="2">
    <location>
        <begin position="52"/>
        <end position="63"/>
    </location>
</feature>
<organism>
    <name type="scientific">Saccharomyces cerevisiae (strain ATCC 204508 / S288c)</name>
    <name type="common">Baker's yeast</name>
    <dbReference type="NCBI Taxonomy" id="559292"/>
    <lineage>
        <taxon>Eukaryota</taxon>
        <taxon>Fungi</taxon>
        <taxon>Dikarya</taxon>
        <taxon>Ascomycota</taxon>
        <taxon>Saccharomycotina</taxon>
        <taxon>Saccharomycetes</taxon>
        <taxon>Saccharomycetales</taxon>
        <taxon>Saccharomycetaceae</taxon>
        <taxon>Saccharomyces</taxon>
    </lineage>
</organism>
<proteinExistence type="evidence at protein level"/>
<keyword id="KW-0963">Cytoplasm</keyword>
<keyword id="KW-0238">DNA-binding</keyword>
<keyword id="KW-0479">Metal-binding</keyword>
<keyword id="KW-0496">Mitochondrion</keyword>
<keyword id="KW-0539">Nucleus</keyword>
<keyword id="KW-1185">Reference proteome</keyword>
<keyword id="KW-0678">Repressor</keyword>
<keyword id="KW-0804">Transcription</keyword>
<keyword id="KW-0805">Transcription regulation</keyword>
<keyword id="KW-0862">Zinc</keyword>
<accession>P36023</accession>
<accession>D6VXC5</accession>
<dbReference type="EMBL" id="Z28289">
    <property type="protein sequence ID" value="CAA82143.1"/>
    <property type="molecule type" value="Genomic_DNA"/>
</dbReference>
<dbReference type="EMBL" id="BK006944">
    <property type="protein sequence ID" value="DAA09215.1"/>
    <property type="molecule type" value="Genomic_DNA"/>
</dbReference>
<dbReference type="PIR" id="S38140">
    <property type="entry name" value="S38140"/>
</dbReference>
<dbReference type="RefSeq" id="NP_012990.1">
    <property type="nucleotide sequence ID" value="NM_001179854.1"/>
</dbReference>
<dbReference type="BioGRID" id="34195">
    <property type="interactions" value="73"/>
</dbReference>
<dbReference type="DIP" id="DIP-2792N"/>
<dbReference type="FunCoup" id="P36023">
    <property type="interactions" value="285"/>
</dbReference>
<dbReference type="IntAct" id="P36023">
    <property type="interactions" value="5"/>
</dbReference>
<dbReference type="MINT" id="P36023"/>
<dbReference type="STRING" id="4932.YKR064W"/>
<dbReference type="iPTMnet" id="P36023"/>
<dbReference type="PaxDb" id="4932-YKR064W"/>
<dbReference type="PeptideAtlas" id="P36023"/>
<dbReference type="EnsemblFungi" id="YKR064W_mRNA">
    <property type="protein sequence ID" value="YKR064W"/>
    <property type="gene ID" value="YKR064W"/>
</dbReference>
<dbReference type="GeneID" id="853938"/>
<dbReference type="KEGG" id="sce:YKR064W"/>
<dbReference type="AGR" id="SGD:S000001772"/>
<dbReference type="SGD" id="S000001772">
    <property type="gene designation" value="OAF3"/>
</dbReference>
<dbReference type="VEuPathDB" id="FungiDB:YKR064W"/>
<dbReference type="eggNOG" id="ENOG502QQCV">
    <property type="taxonomic scope" value="Eukaryota"/>
</dbReference>
<dbReference type="GeneTree" id="ENSGT00940000176581"/>
<dbReference type="HOGENOM" id="CLU_018684_0_0_1"/>
<dbReference type="InParanoid" id="P36023"/>
<dbReference type="OMA" id="WCAPEDG"/>
<dbReference type="OrthoDB" id="2406834at2759"/>
<dbReference type="BioCyc" id="YEAST:G3O-32032-MONOMER"/>
<dbReference type="BioGRID-ORCS" id="853938">
    <property type="hits" value="0 hits in 10 CRISPR screens"/>
</dbReference>
<dbReference type="PRO" id="PR:P36023"/>
<dbReference type="Proteomes" id="UP000002311">
    <property type="component" value="Chromosome XI"/>
</dbReference>
<dbReference type="RNAct" id="P36023">
    <property type="molecule type" value="protein"/>
</dbReference>
<dbReference type="GO" id="GO:0005737">
    <property type="term" value="C:cytoplasm"/>
    <property type="evidence" value="ECO:0007005"/>
    <property type="project" value="SGD"/>
</dbReference>
<dbReference type="GO" id="GO:0005739">
    <property type="term" value="C:mitochondrion"/>
    <property type="evidence" value="ECO:0007005"/>
    <property type="project" value="SGD"/>
</dbReference>
<dbReference type="GO" id="GO:0005634">
    <property type="term" value="C:nucleus"/>
    <property type="evidence" value="ECO:0007005"/>
    <property type="project" value="SGD"/>
</dbReference>
<dbReference type="GO" id="GO:0003677">
    <property type="term" value="F:DNA binding"/>
    <property type="evidence" value="ECO:0007669"/>
    <property type="project" value="UniProtKB-KW"/>
</dbReference>
<dbReference type="GO" id="GO:0000981">
    <property type="term" value="F:DNA-binding transcription factor activity, RNA polymerase II-specific"/>
    <property type="evidence" value="ECO:0000247"/>
    <property type="project" value="SGD"/>
</dbReference>
<dbReference type="GO" id="GO:0008270">
    <property type="term" value="F:zinc ion binding"/>
    <property type="evidence" value="ECO:0007669"/>
    <property type="project" value="InterPro"/>
</dbReference>
<dbReference type="GO" id="GO:0071400">
    <property type="term" value="P:cellular response to oleic acid"/>
    <property type="evidence" value="ECO:0000315"/>
    <property type="project" value="SGD"/>
</dbReference>
<dbReference type="GO" id="GO:0000122">
    <property type="term" value="P:negative regulation of transcription by RNA polymerase II"/>
    <property type="evidence" value="ECO:0000315"/>
    <property type="project" value="SGD"/>
</dbReference>
<dbReference type="GO" id="GO:0045944">
    <property type="term" value="P:positive regulation of transcription by RNA polymerase II"/>
    <property type="evidence" value="ECO:0000318"/>
    <property type="project" value="GO_Central"/>
</dbReference>
<dbReference type="CDD" id="cd00067">
    <property type="entry name" value="GAL4"/>
    <property type="match status" value="1"/>
</dbReference>
<dbReference type="Gene3D" id="4.10.240.10">
    <property type="entry name" value="Zn(2)-C6 fungal-type DNA-binding domain"/>
    <property type="match status" value="1"/>
</dbReference>
<dbReference type="InterPro" id="IPR050675">
    <property type="entry name" value="OAF3"/>
</dbReference>
<dbReference type="InterPro" id="IPR036864">
    <property type="entry name" value="Zn2-C6_fun-type_DNA-bd_sf"/>
</dbReference>
<dbReference type="InterPro" id="IPR001138">
    <property type="entry name" value="Zn2Cys6_DnaBD"/>
</dbReference>
<dbReference type="PANTHER" id="PTHR31069:SF33">
    <property type="entry name" value="OLEATE ACTIVATED TRANSCRIPTION FACTOR 3"/>
    <property type="match status" value="1"/>
</dbReference>
<dbReference type="PANTHER" id="PTHR31069">
    <property type="entry name" value="OLEATE-ACTIVATED TRANSCRIPTION FACTOR 1-RELATED"/>
    <property type="match status" value="1"/>
</dbReference>
<dbReference type="Pfam" id="PF00172">
    <property type="entry name" value="Zn_clus"/>
    <property type="match status" value="1"/>
</dbReference>
<dbReference type="SMART" id="SM00066">
    <property type="entry name" value="GAL4"/>
    <property type="match status" value="1"/>
</dbReference>
<dbReference type="SUPFAM" id="SSF57701">
    <property type="entry name" value="Zn2/Cys6 DNA-binding domain"/>
    <property type="match status" value="1"/>
</dbReference>
<dbReference type="PROSITE" id="PS00463">
    <property type="entry name" value="ZN2_CY6_FUNGAL_1"/>
    <property type="match status" value="1"/>
</dbReference>
<dbReference type="PROSITE" id="PS50048">
    <property type="entry name" value="ZN2_CY6_FUNGAL_2"/>
    <property type="match status" value="1"/>
</dbReference>
<name>OAF3_YEAST</name>
<protein>
    <recommendedName>
        <fullName>Oleate activated transcription factor 3</fullName>
    </recommendedName>
</protein>
<reference key="1">
    <citation type="journal article" date="1994" name="Nature">
        <title>Complete DNA sequence of yeast chromosome XI.</title>
        <authorList>
            <person name="Dujon B."/>
            <person name="Alexandraki D."/>
            <person name="Andre B."/>
            <person name="Ansorge W."/>
            <person name="Baladron V."/>
            <person name="Ballesta J.P.G."/>
            <person name="Banrevi A."/>
            <person name="Bolle P.-A."/>
            <person name="Bolotin-Fukuhara M."/>
            <person name="Bossier P."/>
            <person name="Bou G."/>
            <person name="Boyer J."/>
            <person name="Buitrago M.J."/>
            <person name="Cheret G."/>
            <person name="Colleaux L."/>
            <person name="Daignan-Fornier B."/>
            <person name="del Rey F."/>
            <person name="Dion C."/>
            <person name="Domdey H."/>
            <person name="Duesterhoeft A."/>
            <person name="Duesterhus S."/>
            <person name="Entian K.-D."/>
            <person name="Erfle H."/>
            <person name="Esteban P.F."/>
            <person name="Feldmann H."/>
            <person name="Fernandes L."/>
            <person name="Fobo G.M."/>
            <person name="Fritz C."/>
            <person name="Fukuhara H."/>
            <person name="Gabel C."/>
            <person name="Gaillon L."/>
            <person name="Garcia-Cantalejo J.M."/>
            <person name="Garcia-Ramirez J.J."/>
            <person name="Gent M.E."/>
            <person name="Ghazvini M."/>
            <person name="Goffeau A."/>
            <person name="Gonzalez A."/>
            <person name="Grothues D."/>
            <person name="Guerreiro P."/>
            <person name="Hegemann J.H."/>
            <person name="Hewitt N."/>
            <person name="Hilger F."/>
            <person name="Hollenberg C.P."/>
            <person name="Horaitis O."/>
            <person name="Indge K.J."/>
            <person name="Jacquier A."/>
            <person name="James C.M."/>
            <person name="Jauniaux J.-C."/>
            <person name="Jimenez A."/>
            <person name="Keuchel H."/>
            <person name="Kirchrath L."/>
            <person name="Kleine K."/>
            <person name="Koetter P."/>
            <person name="Legrain P."/>
            <person name="Liebl S."/>
            <person name="Louis E.J."/>
            <person name="Maia e Silva A."/>
            <person name="Marck C."/>
            <person name="Monnier A.-L."/>
            <person name="Moestl D."/>
            <person name="Mueller S."/>
            <person name="Obermaier B."/>
            <person name="Oliver S.G."/>
            <person name="Pallier C."/>
            <person name="Pascolo S."/>
            <person name="Pfeiffer F."/>
            <person name="Philippsen P."/>
            <person name="Planta R.J."/>
            <person name="Pohl F.M."/>
            <person name="Pohl T.M."/>
            <person name="Poehlmann R."/>
            <person name="Portetelle D."/>
            <person name="Purnelle B."/>
            <person name="Puzos V."/>
            <person name="Ramezani Rad M."/>
            <person name="Rasmussen S.W."/>
            <person name="Remacha M.A."/>
            <person name="Revuelta J.L."/>
            <person name="Richard G.-F."/>
            <person name="Rieger M."/>
            <person name="Rodrigues-Pousada C."/>
            <person name="Rose M."/>
            <person name="Rupp T."/>
            <person name="Santos M.A."/>
            <person name="Schwager C."/>
            <person name="Sensen C."/>
            <person name="Skala J."/>
            <person name="Soares H."/>
            <person name="Sor F."/>
            <person name="Stegemann J."/>
            <person name="Tettelin H."/>
            <person name="Thierry A."/>
            <person name="Tzermia M."/>
            <person name="Urrestarazu L.A."/>
            <person name="van Dyck L."/>
            <person name="van Vliet-Reedijk J.C."/>
            <person name="Valens M."/>
            <person name="Vandenbol M."/>
            <person name="Vilela C."/>
            <person name="Vissers S."/>
            <person name="von Wettstein D."/>
            <person name="Voss H."/>
            <person name="Wiemann S."/>
            <person name="Xu G."/>
            <person name="Zimmermann J."/>
            <person name="Haasemann M."/>
            <person name="Becker I."/>
            <person name="Mewes H.-W."/>
        </authorList>
    </citation>
    <scope>NUCLEOTIDE SEQUENCE [LARGE SCALE GENOMIC DNA]</scope>
    <source>
        <strain>ATCC 204508 / S288c</strain>
    </source>
</reference>
<reference key="2">
    <citation type="journal article" date="2014" name="G3 (Bethesda)">
        <title>The reference genome sequence of Saccharomyces cerevisiae: Then and now.</title>
        <authorList>
            <person name="Engel S.R."/>
            <person name="Dietrich F.S."/>
            <person name="Fisk D.G."/>
            <person name="Binkley G."/>
            <person name="Balakrishnan R."/>
            <person name="Costanzo M.C."/>
            <person name="Dwight S.S."/>
            <person name="Hitz B.C."/>
            <person name="Karra K."/>
            <person name="Nash R.S."/>
            <person name="Weng S."/>
            <person name="Wong E.D."/>
            <person name="Lloyd P."/>
            <person name="Skrzypek M.S."/>
            <person name="Miyasato S.R."/>
            <person name="Simison M."/>
            <person name="Cherry J.M."/>
        </authorList>
    </citation>
    <scope>GENOME REANNOTATION</scope>
    <source>
        <strain>ATCC 204508 / S288c</strain>
    </source>
</reference>
<reference key="3">
    <citation type="journal article" date="2003" name="Nature">
        <title>Global analysis of protein localization in budding yeast.</title>
        <authorList>
            <person name="Huh W.-K."/>
            <person name="Falvo J.V."/>
            <person name="Gerke L.C."/>
            <person name="Carroll A.S."/>
            <person name="Howson R.W."/>
            <person name="Weissman J.S."/>
            <person name="O'Shea E.K."/>
        </authorList>
    </citation>
    <scope>SUBCELLULAR LOCATION [LARGE SCALE ANALYSIS]</scope>
</reference>
<reference key="4">
    <citation type="journal article" date="2003" name="Nature">
        <title>Global analysis of protein expression in yeast.</title>
        <authorList>
            <person name="Ghaemmaghami S."/>
            <person name="Huh W.-K."/>
            <person name="Bower K."/>
            <person name="Howson R.W."/>
            <person name="Belle A."/>
            <person name="Dephoure N."/>
            <person name="O'Shea E.K."/>
            <person name="Weissman J.S."/>
        </authorList>
    </citation>
    <scope>LEVEL OF PROTEIN EXPRESSION [LARGE SCALE ANALYSIS]</scope>
</reference>
<reference key="5">
    <citation type="journal article" date="2003" name="Proc. Natl. Acad. Sci. U.S.A.">
        <title>The proteome of Saccharomyces cerevisiae mitochondria.</title>
        <authorList>
            <person name="Sickmann A."/>
            <person name="Reinders J."/>
            <person name="Wagner Y."/>
            <person name="Joppich C."/>
            <person name="Zahedi R.P."/>
            <person name="Meyer H.E."/>
            <person name="Schoenfisch B."/>
            <person name="Perschil I."/>
            <person name="Chacinska A."/>
            <person name="Guiard B."/>
            <person name="Rehling P."/>
            <person name="Pfanner N."/>
            <person name="Meisinger C."/>
        </authorList>
    </citation>
    <scope>SUBCELLULAR LOCATION [LARGE SCALE ANALYSIS]</scope>
    <source>
        <strain>ATCC 76625 / YPH499</strain>
    </source>
</reference>
<reference key="6">
    <citation type="journal article" date="2006" name="Microbiol. Mol. Biol. Rev.">
        <title>A fungal family of transcriptional regulators: the zinc cluster proteins.</title>
        <authorList>
            <person name="MacPherson S."/>
            <person name="Larochelle M."/>
            <person name="Turcotte B."/>
        </authorList>
    </citation>
    <scope>DOMAIN</scope>
    <scope>PREDICTION OF FUNCTION</scope>
</reference>
<reference key="7">
    <citation type="journal article" date="2007" name="Mol. Syst. Biol.">
        <title>Transcriptional responses to fatty acid are coordinated by combinatorial control.</title>
        <authorList>
            <person name="Smith J.J."/>
            <person name="Ramsey S.A."/>
            <person name="Marelli M."/>
            <person name="Marzolf B."/>
            <person name="Hwang D."/>
            <person name="Saleem R.A."/>
            <person name="Rachubinski R.A."/>
            <person name="Aitchison J.D."/>
        </authorList>
    </citation>
    <scope>FUNCTION</scope>
</reference>
<reference key="8">
    <citation type="journal article" date="2008" name="Biophys. J.">
        <title>Control of transcriptional variability by overlapping feed-forward regulatory motifs.</title>
        <authorList>
            <person name="Ratushny A.V."/>
            <person name="Ramsey S.A."/>
            <person name="Roda O."/>
            <person name="Wan Y."/>
            <person name="Smith J.J."/>
            <person name="Aitchison J.D."/>
        </authorList>
    </citation>
    <scope>FUNCTION</scope>
</reference>
<comment type="function">
    <text evidence="4 5">Transcriptional inhibitor with a significantly increased number of target genes in response to oleate.</text>
</comment>
<comment type="subcellular location">
    <subcellularLocation>
        <location>Cytoplasm</location>
    </subcellularLocation>
    <subcellularLocation>
        <location>Nucleus</location>
    </subcellularLocation>
    <subcellularLocation>
        <location>Mitochondrion</location>
    </subcellularLocation>
</comment>
<comment type="miscellaneous">
    <text evidence="3">Present with 149 molecules/cell in log phase SD medium.</text>
</comment>
<comment type="similarity">
    <text evidence="6">Belongs to the OAF3 family.</text>
</comment>